<feature type="initiator methionine" description="Removed" evidence="1">
    <location>
        <position position="1"/>
    </location>
</feature>
<feature type="chain" id="PRO_0000402049" description="Methylthioribose-1-phosphate isomerase">
    <location>
        <begin position="2"/>
        <end position="411"/>
    </location>
</feature>
<feature type="active site" description="Proton donor" evidence="2">
    <location>
        <position position="280"/>
    </location>
</feature>
<feature type="site" description="Transition state stabilizer" evidence="2">
    <location>
        <position position="181"/>
    </location>
</feature>
<feature type="modified residue" description="N-acetylserine" evidence="1">
    <location>
        <position position="2"/>
    </location>
</feature>
<feature type="modified residue" description="Phosphoserine" evidence="1">
    <location>
        <position position="351"/>
    </location>
</feature>
<sequence>MSLEAIVFDRSEPENVSVKVLDQLLLPYTTKYVPIHTIDDGYSVIKSMQVRGAPAIAIVGSLSVLTEVQLIKHNPTSDVATLYSLVNWESTKTVLNKRLDFLLSSRPTAVNLSNSLVEIKNILKSSSDLKAFDGSLYNYVCELIDEDLANNMKMGDNGAKYLIDVLQKDGFKDEFAVLTICNTGSLATSGYGTALGVIRSLWKDSLAKTDKADSGLDNEKCPRMGHVFPLETRPYNQGSRLTAYELVYDKIPSTLITDSSIAYRIRTSPIPIKAAFVGADRIVRNGDTANKIGTLQLAVICKQFGIKFFVVAPKTTIDNVTETGDDIIVEERNPEEFKVVTGTVINPENGSLILNESGEPITGKVGIAPLEINVWNPAFDITPHELIDGIITEEGVFTKNSSGEFQLESLF</sequence>
<proteinExistence type="inferred from homology"/>
<evidence type="ECO:0000250" key="1">
    <source>
        <dbReference type="UniProtKB" id="Q06489"/>
    </source>
</evidence>
<evidence type="ECO:0000255" key="2">
    <source>
        <dbReference type="HAMAP-Rule" id="MF_03119"/>
    </source>
</evidence>
<gene>
    <name evidence="2" type="primary">MRI1</name>
    <name type="ORF">EC1118_1P2_4456g</name>
</gene>
<accession>C8ZJE0</accession>
<keyword id="KW-0007">Acetylation</keyword>
<keyword id="KW-0028">Amino-acid biosynthesis</keyword>
<keyword id="KW-0963">Cytoplasm</keyword>
<keyword id="KW-0413">Isomerase</keyword>
<keyword id="KW-0486">Methionine biosynthesis</keyword>
<keyword id="KW-0539">Nucleus</keyword>
<keyword id="KW-0597">Phosphoprotein</keyword>
<dbReference type="EC" id="5.3.1.23" evidence="2"/>
<dbReference type="EMBL" id="FN394217">
    <property type="protein sequence ID" value="CAY87071.1"/>
    <property type="molecule type" value="Genomic_DNA"/>
</dbReference>
<dbReference type="SMR" id="C8ZJE0"/>
<dbReference type="HOGENOM" id="CLU_016218_1_3_1"/>
<dbReference type="OrthoDB" id="29993at4893"/>
<dbReference type="UniPathway" id="UPA00904">
    <property type="reaction ID" value="UER00874"/>
</dbReference>
<dbReference type="Proteomes" id="UP000000286">
    <property type="component" value="Chromosome XVI, Scaffold EC1118_1P2"/>
</dbReference>
<dbReference type="GO" id="GO:0005737">
    <property type="term" value="C:cytoplasm"/>
    <property type="evidence" value="ECO:0007669"/>
    <property type="project" value="UniProtKB-SubCell"/>
</dbReference>
<dbReference type="GO" id="GO:0005634">
    <property type="term" value="C:nucleus"/>
    <property type="evidence" value="ECO:0007669"/>
    <property type="project" value="UniProtKB-SubCell"/>
</dbReference>
<dbReference type="GO" id="GO:0046523">
    <property type="term" value="F:S-methyl-5-thioribose-1-phosphate isomerase activity"/>
    <property type="evidence" value="ECO:0007669"/>
    <property type="project" value="UniProtKB-UniRule"/>
</dbReference>
<dbReference type="GO" id="GO:0019509">
    <property type="term" value="P:L-methionine salvage from methylthioadenosine"/>
    <property type="evidence" value="ECO:0007669"/>
    <property type="project" value="UniProtKB-UniRule"/>
</dbReference>
<dbReference type="FunFam" id="1.20.120.420:FF:000006">
    <property type="entry name" value="Methylthioribose-1-phosphate isomerase"/>
    <property type="match status" value="1"/>
</dbReference>
<dbReference type="FunFam" id="3.40.50.10470:FF:000026">
    <property type="entry name" value="Methylthioribose-1-phosphate isomerase"/>
    <property type="match status" value="1"/>
</dbReference>
<dbReference type="Gene3D" id="1.20.120.420">
    <property type="entry name" value="translation initiation factor eif-2b, domain 1"/>
    <property type="match status" value="1"/>
</dbReference>
<dbReference type="Gene3D" id="3.40.50.10470">
    <property type="entry name" value="Translation initiation factor eif-2b, domain 2"/>
    <property type="match status" value="1"/>
</dbReference>
<dbReference type="HAMAP" id="MF_01678">
    <property type="entry name" value="Salvage_MtnA"/>
    <property type="match status" value="1"/>
</dbReference>
<dbReference type="InterPro" id="IPR000649">
    <property type="entry name" value="IF-2B-related"/>
</dbReference>
<dbReference type="InterPro" id="IPR005251">
    <property type="entry name" value="IF-M1Pi"/>
</dbReference>
<dbReference type="InterPro" id="IPR042529">
    <property type="entry name" value="IF_2B-like_C"/>
</dbReference>
<dbReference type="InterPro" id="IPR011559">
    <property type="entry name" value="Initiation_fac_2B_a/b/d"/>
</dbReference>
<dbReference type="InterPro" id="IPR027363">
    <property type="entry name" value="M1Pi_N"/>
</dbReference>
<dbReference type="InterPro" id="IPR037171">
    <property type="entry name" value="NagB/RpiA_transferase-like"/>
</dbReference>
<dbReference type="NCBIfam" id="TIGR00524">
    <property type="entry name" value="eIF-2B_rel"/>
    <property type="match status" value="1"/>
</dbReference>
<dbReference type="NCBIfam" id="NF004326">
    <property type="entry name" value="PRK05720.1"/>
    <property type="match status" value="1"/>
</dbReference>
<dbReference type="NCBIfam" id="TIGR00512">
    <property type="entry name" value="salvage_mtnA"/>
    <property type="match status" value="1"/>
</dbReference>
<dbReference type="PANTHER" id="PTHR43475">
    <property type="entry name" value="METHYLTHIORIBOSE-1-PHOSPHATE ISOMERASE"/>
    <property type="match status" value="1"/>
</dbReference>
<dbReference type="PANTHER" id="PTHR43475:SF1">
    <property type="entry name" value="METHYLTHIORIBOSE-1-PHOSPHATE ISOMERASE"/>
    <property type="match status" value="1"/>
</dbReference>
<dbReference type="Pfam" id="PF01008">
    <property type="entry name" value="IF-2B"/>
    <property type="match status" value="1"/>
</dbReference>
<dbReference type="SUPFAM" id="SSF100950">
    <property type="entry name" value="NagB/RpiA/CoA transferase-like"/>
    <property type="match status" value="1"/>
</dbReference>
<organism>
    <name type="scientific">Saccharomyces cerevisiae (strain Lalvin EC1118 / Prise de mousse)</name>
    <name type="common">Baker's yeast</name>
    <dbReference type="NCBI Taxonomy" id="643680"/>
    <lineage>
        <taxon>Eukaryota</taxon>
        <taxon>Fungi</taxon>
        <taxon>Dikarya</taxon>
        <taxon>Ascomycota</taxon>
        <taxon>Saccharomycotina</taxon>
        <taxon>Saccharomycetes</taxon>
        <taxon>Saccharomycetales</taxon>
        <taxon>Saccharomycetaceae</taxon>
        <taxon>Saccharomyces</taxon>
    </lineage>
</organism>
<protein>
    <recommendedName>
        <fullName evidence="2">Methylthioribose-1-phosphate isomerase</fullName>
        <shortName evidence="2">M1Pi</shortName>
        <shortName evidence="2">MTR-1-P isomerase</shortName>
        <ecNumber evidence="2">5.3.1.23</ecNumber>
    </recommendedName>
    <alternativeName>
        <fullName evidence="2">S-methyl-5-thioribose-1-phosphate isomerase</fullName>
    </alternativeName>
    <alternativeName>
        <fullName evidence="2">Translation initiation factor eIF-2B subunit alpha/beta/delta-like protein</fullName>
    </alternativeName>
</protein>
<name>MTNA_YEAS8</name>
<reference key="1">
    <citation type="journal article" date="2009" name="Proc. Natl. Acad. Sci. U.S.A.">
        <title>Eukaryote-to-eukaryote gene transfer events revealed by the genome sequence of the wine yeast Saccharomyces cerevisiae EC1118.</title>
        <authorList>
            <person name="Novo M."/>
            <person name="Bigey F."/>
            <person name="Beyne E."/>
            <person name="Galeote V."/>
            <person name="Gavory F."/>
            <person name="Mallet S."/>
            <person name="Cambon B."/>
            <person name="Legras J.-L."/>
            <person name="Wincker P."/>
            <person name="Casaregola S."/>
            <person name="Dequin S."/>
        </authorList>
    </citation>
    <scope>NUCLEOTIDE SEQUENCE [LARGE SCALE GENOMIC DNA]</scope>
    <source>
        <strain>Lalvin EC1118 / Prise de mousse</strain>
    </source>
</reference>
<comment type="function">
    <text evidence="2">Catalyzes the interconversion of methylthioribose-1-phosphate (MTR-1-P) into methylthioribulose-1-phosphate (MTRu-1-P).</text>
</comment>
<comment type="catalytic activity">
    <reaction evidence="2">
        <text>5-(methylsulfanyl)-alpha-D-ribose 1-phosphate = 5-(methylsulfanyl)-D-ribulose 1-phosphate</text>
        <dbReference type="Rhea" id="RHEA:19989"/>
        <dbReference type="ChEBI" id="CHEBI:58533"/>
        <dbReference type="ChEBI" id="CHEBI:58548"/>
        <dbReference type="EC" id="5.3.1.23"/>
    </reaction>
</comment>
<comment type="pathway">
    <text evidence="2">Amino-acid biosynthesis; L-methionine biosynthesis via salvage pathway; L-methionine from S-methyl-5-thio-alpha-D-ribose 1-phosphate: step 1/6.</text>
</comment>
<comment type="subunit">
    <text>Homodimer.</text>
</comment>
<comment type="subcellular location">
    <subcellularLocation>
        <location evidence="2">Cytoplasm</location>
    </subcellularLocation>
    <subcellularLocation>
        <location evidence="2">Nucleus</location>
    </subcellularLocation>
</comment>
<comment type="similarity">
    <text evidence="2">Belongs to the eIF-2B alpha/beta/delta subunits family. MtnA subfamily.</text>
</comment>